<sequence length="269" mass="30255">MQEIIASVDHIKFDLEIAVEQQLGAQPLPFPGMDKSGAAVCEFFLKAACGKGGMCPFRHISGEKTVVCKHWLRGLCKKGDQCEFLHEYDMTKMPECYFYSKFGECSNKECPFLHIDPESKIKDCPWYDRGFCKHGPLCRHRHTRRVICVNYLVGFCPEGPSCKFMHPRFELPMGTTEQPPLPQQTQPPAKQSNNPPLQRSSSLIQLTSQNSSPNQQRTPQVIGVMQSQNSSAGNRGPRPLEQVTCYKCGEKGHYANRCTKGHLAFLSGQ</sequence>
<feature type="chain" id="PRO_0000074402" description="Cleavage and polyadenylation specificity factor subunit 4">
    <location>
        <begin position="1"/>
        <end position="269"/>
    </location>
</feature>
<feature type="zinc finger region" description="C3H1-type 1" evidence="2">
    <location>
        <begin position="35"/>
        <end position="61"/>
    </location>
</feature>
<feature type="zinc finger region" description="C3H1-type 2" evidence="2">
    <location>
        <begin position="62"/>
        <end position="89"/>
    </location>
</feature>
<feature type="zinc finger region" description="C3H1-type 3" evidence="2">
    <location>
        <begin position="90"/>
        <end position="117"/>
    </location>
</feature>
<feature type="zinc finger region" description="C3H1-type 4" evidence="2">
    <location>
        <begin position="118"/>
        <end position="142"/>
    </location>
</feature>
<feature type="zinc finger region" description="C3H1-type 5" evidence="2">
    <location>
        <begin position="143"/>
        <end position="169"/>
    </location>
</feature>
<feature type="zinc finger region" description="CCHC-type" evidence="1">
    <location>
        <begin position="243"/>
        <end position="260"/>
    </location>
</feature>
<feature type="region of interest" description="Disordered" evidence="3">
    <location>
        <begin position="173"/>
        <end position="199"/>
    </location>
</feature>
<feature type="modified residue" description="Phosphoserine" evidence="13">
    <location>
        <position position="200"/>
    </location>
</feature>
<feature type="modified residue" description="Phosphoserine" evidence="10 11">
    <location>
        <position position="202"/>
    </location>
</feature>
<feature type="modified residue" description="Phosphoserine" evidence="10 11 12 13">
    <location>
        <position position="212"/>
    </location>
</feature>
<feature type="modified residue" description="Phosphoserine" evidence="13">
    <location>
        <position position="267"/>
    </location>
</feature>
<feature type="splice variant" id="VSP_008602" description="In isoform 3." evidence="8">
    <location>
        <begin position="191"/>
        <end position="216"/>
    </location>
</feature>
<feature type="splice variant" id="VSP_008601" description="In isoform 2." evidence="8">
    <location>
        <begin position="191"/>
        <end position="215"/>
    </location>
</feature>
<feature type="helix" evidence="17">
    <location>
        <begin position="2"/>
        <end position="5"/>
    </location>
</feature>
<feature type="helix" evidence="17">
    <location>
        <begin position="14"/>
        <end position="20"/>
    </location>
</feature>
<feature type="turn" evidence="17">
    <location>
        <begin position="21"/>
        <end position="24"/>
    </location>
</feature>
<feature type="helix" evidence="17">
    <location>
        <begin position="42"/>
        <end position="46"/>
    </location>
</feature>
<feature type="turn" evidence="17">
    <location>
        <begin position="52"/>
        <end position="54"/>
    </location>
</feature>
<feature type="strand" evidence="17">
    <location>
        <begin position="56"/>
        <end position="58"/>
    </location>
</feature>
<feature type="helix" evidence="15">
    <location>
        <begin position="69"/>
        <end position="72"/>
    </location>
</feature>
<feature type="helix" evidence="15">
    <location>
        <begin position="79"/>
        <end position="81"/>
    </location>
</feature>
<feature type="strand" evidence="15">
    <location>
        <begin position="82"/>
        <end position="85"/>
    </location>
</feature>
<feature type="helix" evidence="17">
    <location>
        <begin position="90"/>
        <end position="92"/>
    </location>
</feature>
<feature type="helix" evidence="15">
    <location>
        <begin position="97"/>
        <end position="102"/>
    </location>
</feature>
<feature type="strand" evidence="14">
    <location>
        <begin position="111"/>
        <end position="113"/>
    </location>
</feature>
<feature type="helix" evidence="16">
    <location>
        <begin position="125"/>
        <end position="129"/>
    </location>
</feature>
<feature type="helix" evidence="16">
    <location>
        <begin position="135"/>
        <end position="137"/>
    </location>
</feature>
<feature type="strand" evidence="16">
    <location>
        <begin position="139"/>
        <end position="141"/>
    </location>
</feature>
<feature type="helix" evidence="16">
    <location>
        <begin position="149"/>
        <end position="153"/>
    </location>
</feature>
<feature type="helix" evidence="16">
    <location>
        <begin position="159"/>
        <end position="161"/>
    </location>
</feature>
<feature type="strand" evidence="16">
    <location>
        <begin position="163"/>
        <end position="165"/>
    </location>
</feature>
<organism>
    <name type="scientific">Homo sapiens</name>
    <name type="common">Human</name>
    <dbReference type="NCBI Taxonomy" id="9606"/>
    <lineage>
        <taxon>Eukaryota</taxon>
        <taxon>Metazoa</taxon>
        <taxon>Chordata</taxon>
        <taxon>Craniata</taxon>
        <taxon>Vertebrata</taxon>
        <taxon>Euteleostomi</taxon>
        <taxon>Mammalia</taxon>
        <taxon>Eutheria</taxon>
        <taxon>Euarchontoglires</taxon>
        <taxon>Primates</taxon>
        <taxon>Haplorrhini</taxon>
        <taxon>Catarrhini</taxon>
        <taxon>Hominidae</taxon>
        <taxon>Homo</taxon>
    </lineage>
</organism>
<reference key="1">
    <citation type="submission" date="1996-11" db="EMBL/GenBank/DDBJ databases">
        <title>Assignment of the human homolog of the zebrafish essential gene no arches to 7q22.1.</title>
        <authorList>
            <person name="Kawakami K."/>
            <person name="Gaiano N."/>
            <person name="Grosshans D."/>
            <person name="Scherer S."/>
            <person name="Tsui L.-C."/>
            <person name="Hopkins N."/>
        </authorList>
    </citation>
    <scope>NUCLEOTIDE SEQUENCE [MRNA] (ISOFORM 1)</scope>
</reference>
<reference key="2">
    <citation type="submission" date="2004-06" db="EMBL/GenBank/DDBJ databases">
        <title>Cloning of human full open reading frames in Gateway(TM) system entry vector (pDONR201).</title>
        <authorList>
            <person name="Halleck A."/>
            <person name="Ebert L."/>
            <person name="Mkoundinya M."/>
            <person name="Schick M."/>
            <person name="Eisenstein S."/>
            <person name="Neubert P."/>
            <person name="Kstrang K."/>
            <person name="Schatten R."/>
            <person name="Shen B."/>
            <person name="Henze S."/>
            <person name="Mar W."/>
            <person name="Korn B."/>
            <person name="Zuo D."/>
            <person name="Hu Y."/>
            <person name="LaBaer J."/>
        </authorList>
    </citation>
    <scope>NUCLEOTIDE SEQUENCE [LARGE SCALE MRNA] (ISOFORM 1)</scope>
</reference>
<reference key="3">
    <citation type="submission" date="2006-12" db="EMBL/GenBank/DDBJ databases">
        <authorList>
            <consortium name="SeattleSNPs variation discovery resource"/>
        </authorList>
    </citation>
    <scope>NUCLEOTIDE SEQUENCE [GENOMIC DNA]</scope>
</reference>
<reference key="4">
    <citation type="journal article" date="2003" name="Science">
        <title>Human chromosome 7: DNA sequence and biology.</title>
        <authorList>
            <person name="Scherer S.W."/>
            <person name="Cheung J."/>
            <person name="MacDonald J.R."/>
            <person name="Osborne L.R."/>
            <person name="Nakabayashi K."/>
            <person name="Herbrick J.-A."/>
            <person name="Carson A.R."/>
            <person name="Parker-Katiraee L."/>
            <person name="Skaug J."/>
            <person name="Khaja R."/>
            <person name="Zhang J."/>
            <person name="Hudek A.K."/>
            <person name="Li M."/>
            <person name="Haddad M."/>
            <person name="Duggan G.E."/>
            <person name="Fernandez B.A."/>
            <person name="Kanematsu E."/>
            <person name="Gentles S."/>
            <person name="Christopoulos C.C."/>
            <person name="Choufani S."/>
            <person name="Kwasnicka D."/>
            <person name="Zheng X.H."/>
            <person name="Lai Z."/>
            <person name="Nusskern D.R."/>
            <person name="Zhang Q."/>
            <person name="Gu Z."/>
            <person name="Lu F."/>
            <person name="Zeesman S."/>
            <person name="Nowaczyk M.J."/>
            <person name="Teshima I."/>
            <person name="Chitayat D."/>
            <person name="Shuman C."/>
            <person name="Weksberg R."/>
            <person name="Zackai E.H."/>
            <person name="Grebe T.A."/>
            <person name="Cox S.R."/>
            <person name="Kirkpatrick S.J."/>
            <person name="Rahman N."/>
            <person name="Friedman J.M."/>
            <person name="Heng H.H.Q."/>
            <person name="Pelicci P.G."/>
            <person name="Lo-Coco F."/>
            <person name="Belloni E."/>
            <person name="Shaffer L.G."/>
            <person name="Pober B."/>
            <person name="Morton C.C."/>
            <person name="Gusella J.F."/>
            <person name="Bruns G.A.P."/>
            <person name="Korf B.R."/>
            <person name="Quade B.J."/>
            <person name="Ligon A.H."/>
            <person name="Ferguson H."/>
            <person name="Higgins A.W."/>
            <person name="Leach N.T."/>
            <person name="Herrick S.R."/>
            <person name="Lemyre E."/>
            <person name="Farra C.G."/>
            <person name="Kim H.-G."/>
            <person name="Summers A.M."/>
            <person name="Gripp K.W."/>
            <person name="Roberts W."/>
            <person name="Szatmari P."/>
            <person name="Winsor E.J.T."/>
            <person name="Grzeschik K.-H."/>
            <person name="Teebi A."/>
            <person name="Minassian B.A."/>
            <person name="Kere J."/>
            <person name="Armengol L."/>
            <person name="Pujana M.A."/>
            <person name="Estivill X."/>
            <person name="Wilson M.D."/>
            <person name="Koop B.F."/>
            <person name="Tosi S."/>
            <person name="Moore G.E."/>
            <person name="Boright A.P."/>
            <person name="Zlotorynski E."/>
            <person name="Kerem B."/>
            <person name="Kroisel P.M."/>
            <person name="Petek E."/>
            <person name="Oscier D.G."/>
            <person name="Mould S.J."/>
            <person name="Doehner H."/>
            <person name="Doehner K."/>
            <person name="Rommens J.M."/>
            <person name="Vincent J.B."/>
            <person name="Venter J.C."/>
            <person name="Li P.W."/>
            <person name="Mural R.J."/>
            <person name="Adams M.D."/>
            <person name="Tsui L.-C."/>
        </authorList>
    </citation>
    <scope>NUCLEOTIDE SEQUENCE [LARGE SCALE GENOMIC DNA]</scope>
</reference>
<reference key="5">
    <citation type="submission" date="2005-09" db="EMBL/GenBank/DDBJ databases">
        <authorList>
            <person name="Mural R.J."/>
            <person name="Istrail S."/>
            <person name="Sutton G.G."/>
            <person name="Florea L."/>
            <person name="Halpern A.L."/>
            <person name="Mobarry C.M."/>
            <person name="Lippert R."/>
            <person name="Walenz B."/>
            <person name="Shatkay H."/>
            <person name="Dew I."/>
            <person name="Miller J.R."/>
            <person name="Flanigan M.J."/>
            <person name="Edwards N.J."/>
            <person name="Bolanos R."/>
            <person name="Fasulo D."/>
            <person name="Halldorsson B.V."/>
            <person name="Hannenhalli S."/>
            <person name="Turner R."/>
            <person name="Yooseph S."/>
            <person name="Lu F."/>
            <person name="Nusskern D.R."/>
            <person name="Shue B.C."/>
            <person name="Zheng X.H."/>
            <person name="Zhong F."/>
            <person name="Delcher A.L."/>
            <person name="Huson D.H."/>
            <person name="Kravitz S.A."/>
            <person name="Mouchard L."/>
            <person name="Reinert K."/>
            <person name="Remington K.A."/>
            <person name="Clark A.G."/>
            <person name="Waterman M.S."/>
            <person name="Eichler E.E."/>
            <person name="Adams M.D."/>
            <person name="Hunkapiller M.W."/>
            <person name="Myers E.W."/>
            <person name="Venter J.C."/>
        </authorList>
    </citation>
    <scope>NUCLEOTIDE SEQUENCE [LARGE SCALE GENOMIC DNA]</scope>
</reference>
<reference key="6">
    <citation type="journal article" date="2004" name="Genome Res.">
        <title>The status, quality, and expansion of the NIH full-length cDNA project: the Mammalian Gene Collection (MGC).</title>
        <authorList>
            <consortium name="The MGC Project Team"/>
        </authorList>
    </citation>
    <scope>NUCLEOTIDE SEQUENCE [LARGE SCALE MRNA] (ISOFORMS 2 AND 3)</scope>
    <source>
        <tissue>Eye</tissue>
        <tissue>PNS</tissue>
    </source>
</reference>
<reference key="7">
    <citation type="journal article" date="1997" name="Genes Dev.">
        <title>The 30-kD subunit of mammalian cleavage and polyadenylation specificity factor and its yeast homolog are RNA-binding zinc finger proteins.</title>
        <authorList>
            <person name="Barabino S.M.L."/>
            <person name="Huebner W."/>
            <person name="Jenny A."/>
            <person name="Minvielle-Sebastia L."/>
            <person name="Keller W."/>
        </authorList>
    </citation>
    <scope>FUNCTION</scope>
</reference>
<reference key="8">
    <citation type="journal article" date="1998" name="Mol. Cell">
        <title>Influenza virus NS1 protein interacts with the cellular 30 kDa subunit of CPSF and inhibits 3'end formation of cellular pre-mRNAs.</title>
        <authorList>
            <person name="Nemeroff M.E."/>
            <person name="Barabino S.M.L."/>
            <person name="Li Y."/>
            <person name="Keller W."/>
            <person name="Krug R.M."/>
        </authorList>
    </citation>
    <scope>INTERACTION WITH INFLUENZA A VIRUS NS1 PROTEIN (MICROBIAL INFECTION)</scope>
</reference>
<reference key="9">
    <citation type="journal article" date="2004" name="EMBO J.">
        <title>Human Fip1 is a subunit of CPSF that binds to U-rich RNA elements and stimulates poly(A) polymerase.</title>
        <authorList>
            <person name="Kaufmann I."/>
            <person name="Martin G."/>
            <person name="Friedlein A."/>
            <person name="Langen H."/>
            <person name="Keller W."/>
        </authorList>
    </citation>
    <scope>FUNCTION IN PRE-MRNA 3'-END PROCESSING</scope>
    <scope>IDENTIFICATION IN THE CPSF COMPLEX</scope>
    <scope>INTERACTION WITH FIP1L1</scope>
</reference>
<reference key="10">
    <citation type="journal article" date="2008" name="Proc. Natl. Acad. Sci. U.S.A.">
        <title>A quantitative atlas of mitotic phosphorylation.</title>
        <authorList>
            <person name="Dephoure N."/>
            <person name="Zhou C."/>
            <person name="Villen J."/>
            <person name="Beausoleil S.A."/>
            <person name="Bakalarski C.E."/>
            <person name="Elledge S.J."/>
            <person name="Gygi S.P."/>
        </authorList>
    </citation>
    <scope>PHOSPHORYLATION [LARGE SCALE ANALYSIS] AT SER-202 AND SER-212</scope>
    <scope>IDENTIFICATION BY MASS SPECTROMETRY [LARGE SCALE ANALYSIS]</scope>
    <source>
        <tissue>Cervix carcinoma</tissue>
    </source>
</reference>
<reference key="11">
    <citation type="journal article" date="2009" name="Anal. Chem.">
        <title>Lys-N and trypsin cover complementary parts of the phosphoproteome in a refined SCX-based approach.</title>
        <authorList>
            <person name="Gauci S."/>
            <person name="Helbig A.O."/>
            <person name="Slijper M."/>
            <person name="Krijgsveld J."/>
            <person name="Heck A.J."/>
            <person name="Mohammed S."/>
        </authorList>
    </citation>
    <scope>IDENTIFICATION BY MASS SPECTROMETRY [LARGE SCALE ANALYSIS]</scope>
</reference>
<reference key="12">
    <citation type="journal article" date="2009" name="Sci. Signal.">
        <title>Quantitative phosphoproteomic analysis of T cell receptor signaling reveals system-wide modulation of protein-protein interactions.</title>
        <authorList>
            <person name="Mayya V."/>
            <person name="Lundgren D.H."/>
            <person name="Hwang S.-I."/>
            <person name="Rezaul K."/>
            <person name="Wu L."/>
            <person name="Eng J.K."/>
            <person name="Rodionov V."/>
            <person name="Han D.K."/>
        </authorList>
    </citation>
    <scope>PHOSPHORYLATION [LARGE SCALE ANALYSIS] AT SER-202 AND SER-212</scope>
    <scope>IDENTIFICATION BY MASS SPECTROMETRY [LARGE SCALE ANALYSIS]</scope>
    <source>
        <tissue>Leukemic T-cell</tissue>
    </source>
</reference>
<reference key="13">
    <citation type="journal article" date="2010" name="EMBO J.">
        <title>The poly A polymerase Star-PAP controls 3'-end cleavage by promoting CPSF interaction and specificity toward the pre-mRNA.</title>
        <authorList>
            <person name="Laishram R.S."/>
            <person name="Anderson R.A."/>
        </authorList>
    </citation>
    <scope>IDENTIFICATION IN THE CPSF COMPLEX</scope>
</reference>
<reference key="14">
    <citation type="journal article" date="2010" name="Sci. Signal.">
        <title>Quantitative phosphoproteomics reveals widespread full phosphorylation site occupancy during mitosis.</title>
        <authorList>
            <person name="Olsen J.V."/>
            <person name="Vermeulen M."/>
            <person name="Santamaria A."/>
            <person name="Kumar C."/>
            <person name="Miller M.L."/>
            <person name="Jensen L.J."/>
            <person name="Gnad F."/>
            <person name="Cox J."/>
            <person name="Jensen T.S."/>
            <person name="Nigg E.A."/>
            <person name="Brunak S."/>
            <person name="Mann M."/>
        </authorList>
    </citation>
    <scope>IDENTIFICATION BY MASS SPECTROMETRY [LARGE SCALE ANALYSIS]</scope>
    <source>
        <tissue>Cervix carcinoma</tissue>
    </source>
</reference>
<reference key="15">
    <citation type="journal article" date="2011" name="Sci. Signal.">
        <title>System-wide temporal characterization of the proteome and phosphoproteome of human embryonic stem cell differentiation.</title>
        <authorList>
            <person name="Rigbolt K.T."/>
            <person name="Prokhorova T.A."/>
            <person name="Akimov V."/>
            <person name="Henningsen J."/>
            <person name="Johansen P.T."/>
            <person name="Kratchmarova I."/>
            <person name="Kassem M."/>
            <person name="Mann M."/>
            <person name="Olsen J.V."/>
            <person name="Blagoev B."/>
        </authorList>
    </citation>
    <scope>PHOSPHORYLATION [LARGE SCALE ANALYSIS] AT SER-212</scope>
    <scope>IDENTIFICATION BY MASS SPECTROMETRY [LARGE SCALE ANALYSIS]</scope>
</reference>
<reference key="16">
    <citation type="journal article" date="2013" name="J. Proteome Res.">
        <title>Toward a comprehensive characterization of a human cancer cell phosphoproteome.</title>
        <authorList>
            <person name="Zhou H."/>
            <person name="Di Palma S."/>
            <person name="Preisinger C."/>
            <person name="Peng M."/>
            <person name="Polat A.N."/>
            <person name="Heck A.J."/>
            <person name="Mohammed S."/>
        </authorList>
    </citation>
    <scope>PHOSPHORYLATION [LARGE SCALE ANALYSIS] AT SER-200; SER-212 AND SER-267</scope>
    <scope>IDENTIFICATION BY MASS SPECTROMETRY [LARGE SCALE ANALYSIS]</scope>
    <source>
        <tissue>Cervix carcinoma</tissue>
        <tissue>Erythroleukemia</tissue>
    </source>
</reference>
<reference key="17">
    <citation type="submission" date="2006-06" db="PDB data bank">
        <title>Solution structure of CCCH-type zinc-finger domain 2 in cleavage and polyadenylation specificity factor.</title>
        <authorList>
            <consortium name="RIKEN structural genomics initiative (RSGI)"/>
        </authorList>
    </citation>
    <scope>STRUCTURE BY NMR OF 61-126</scope>
</reference>
<protein>
    <recommendedName>
        <fullName>Cleavage and polyadenylation specificity factor subunit 4</fullName>
    </recommendedName>
    <alternativeName>
        <fullName>Cleavage and polyadenylation specificity factor 30 kDa subunit</fullName>
        <shortName>CPSF 30 kDa subunit</shortName>
    </alternativeName>
    <alternativeName>
        <fullName>NS1 effector domain-binding protein 1</fullName>
        <shortName>Neb-1</shortName>
    </alternativeName>
    <alternativeName>
        <fullName>No arches homolog</fullName>
    </alternativeName>
</protein>
<dbReference type="EMBL" id="U79569">
    <property type="protein sequence ID" value="AAD00321.1"/>
    <property type="molecule type" value="mRNA"/>
</dbReference>
<dbReference type="EMBL" id="CR542161">
    <property type="protein sequence ID" value="CAG46958.1"/>
    <property type="molecule type" value="mRNA"/>
</dbReference>
<dbReference type="EMBL" id="EF191081">
    <property type="protein sequence ID" value="ABN05292.1"/>
    <property type="molecule type" value="Genomic_DNA"/>
</dbReference>
<dbReference type="EMBL" id="CH236956">
    <property type="protein sequence ID" value="EAL23878.1"/>
    <property type="molecule type" value="Genomic_DNA"/>
</dbReference>
<dbReference type="EMBL" id="CH471091">
    <property type="protein sequence ID" value="EAW76667.1"/>
    <property type="molecule type" value="Genomic_DNA"/>
</dbReference>
<dbReference type="EMBL" id="CH471091">
    <property type="protein sequence ID" value="EAW76668.1"/>
    <property type="molecule type" value="Genomic_DNA"/>
</dbReference>
<dbReference type="EMBL" id="BC003101">
    <property type="protein sequence ID" value="AAH03101.1"/>
    <property type="molecule type" value="mRNA"/>
</dbReference>
<dbReference type="EMBL" id="BC050738">
    <property type="protein sequence ID" value="AAH50738.1"/>
    <property type="molecule type" value="mRNA"/>
</dbReference>
<dbReference type="CCDS" id="CCDS47652.1">
    <molecule id="O95639-2"/>
</dbReference>
<dbReference type="CCDS" id="CCDS5664.1">
    <molecule id="O95639-1"/>
</dbReference>
<dbReference type="RefSeq" id="NP_001075028.1">
    <molecule id="O95639-2"/>
    <property type="nucleotide sequence ID" value="NM_001081559.3"/>
</dbReference>
<dbReference type="RefSeq" id="NP_001305089.1">
    <molecule id="O95639-3"/>
    <property type="nucleotide sequence ID" value="NM_001318160.2"/>
</dbReference>
<dbReference type="RefSeq" id="NP_001305090.1">
    <property type="nucleotide sequence ID" value="NM_001318161.1"/>
</dbReference>
<dbReference type="RefSeq" id="NP_001305091.1">
    <property type="nucleotide sequence ID" value="NM_001318162.1"/>
</dbReference>
<dbReference type="RefSeq" id="NP_006684.1">
    <molecule id="O95639-1"/>
    <property type="nucleotide sequence ID" value="NM_006693.4"/>
</dbReference>
<dbReference type="PDB" id="2D9N">
    <property type="method" value="NMR"/>
    <property type="chains" value="A=61-126"/>
</dbReference>
<dbReference type="PDB" id="2RHK">
    <property type="method" value="X-ray"/>
    <property type="resolution" value="1.95 A"/>
    <property type="chains" value="C/D=61-121"/>
</dbReference>
<dbReference type="PDB" id="6DNH">
    <property type="method" value="EM"/>
    <property type="resolution" value="3.40 A"/>
    <property type="chains" value="C=1-269"/>
</dbReference>
<dbReference type="PDB" id="6FUW">
    <property type="method" value="EM"/>
    <property type="resolution" value="3.07 A"/>
    <property type="chains" value="C=1-178"/>
</dbReference>
<dbReference type="PDB" id="6URG">
    <property type="method" value="EM"/>
    <property type="resolution" value="3.00 A"/>
    <property type="chains" value="C=1-269"/>
</dbReference>
<dbReference type="PDB" id="6URO">
    <property type="method" value="EM"/>
    <property type="resolution" value="3.60 A"/>
    <property type="chains" value="C=1-269"/>
</dbReference>
<dbReference type="PDB" id="7K95">
    <property type="method" value="X-ray"/>
    <property type="resolution" value="1.90 A"/>
    <property type="chains" value="A=114-173"/>
</dbReference>
<dbReference type="PDB" id="7ZYH">
    <property type="method" value="X-ray"/>
    <property type="resolution" value="2.20 A"/>
    <property type="chains" value="A/D/G/J=118-178"/>
</dbReference>
<dbReference type="PDB" id="8E3I">
    <property type="method" value="EM"/>
    <property type="resolution" value="2.53 A"/>
    <property type="chains" value="C=1-269"/>
</dbReference>
<dbReference type="PDB" id="8E3Q">
    <property type="method" value="EM"/>
    <property type="resolution" value="2.68 A"/>
    <property type="chains" value="C=1-269"/>
</dbReference>
<dbReference type="PDB" id="8R8R">
    <property type="method" value="EM"/>
    <property type="resolution" value="2.79 A"/>
    <property type="chains" value="C=2-269"/>
</dbReference>
<dbReference type="PDBsum" id="2D9N"/>
<dbReference type="PDBsum" id="2RHK"/>
<dbReference type="PDBsum" id="6DNH"/>
<dbReference type="PDBsum" id="6FUW"/>
<dbReference type="PDBsum" id="6URG"/>
<dbReference type="PDBsum" id="6URO"/>
<dbReference type="PDBsum" id="7K95"/>
<dbReference type="PDBsum" id="7ZYH"/>
<dbReference type="PDBsum" id="8E3I"/>
<dbReference type="PDBsum" id="8E3Q"/>
<dbReference type="PDBsum" id="8R8R"/>
<dbReference type="EMDB" id="EMD-14185"/>
<dbReference type="EMDB" id="EMD-19008"/>
<dbReference type="EMDB" id="EMD-20860"/>
<dbReference type="EMDB" id="EMD-20861"/>
<dbReference type="EMDB" id="EMD-27866"/>
<dbReference type="EMDB" id="EMD-27870"/>
<dbReference type="EMDB" id="EMD-4225"/>
<dbReference type="EMDB" id="EMD-7112"/>
<dbReference type="SMR" id="O95639"/>
<dbReference type="BioGRID" id="116104">
    <property type="interactions" value="101"/>
</dbReference>
<dbReference type="ComplexPortal" id="CPX-2698">
    <property type="entry name" value="pre-mRNA cleavage and polyadenylation specificity factor complex"/>
</dbReference>
<dbReference type="CORUM" id="O95639"/>
<dbReference type="DIP" id="DIP-48675N"/>
<dbReference type="FunCoup" id="O95639">
    <property type="interactions" value="3036"/>
</dbReference>
<dbReference type="IntAct" id="O95639">
    <property type="interactions" value="75"/>
</dbReference>
<dbReference type="MINT" id="O95639"/>
<dbReference type="STRING" id="9606.ENSP00000292476"/>
<dbReference type="GlyGen" id="O95639">
    <property type="glycosylation" value="2 sites, 1 N-linked glycan (1 site), 1 O-linked glycan (1 site)"/>
</dbReference>
<dbReference type="iPTMnet" id="O95639"/>
<dbReference type="MetOSite" id="O95639"/>
<dbReference type="PhosphoSitePlus" id="O95639"/>
<dbReference type="SwissPalm" id="O95639"/>
<dbReference type="BioMuta" id="CPSF4"/>
<dbReference type="jPOST" id="O95639"/>
<dbReference type="MassIVE" id="O95639"/>
<dbReference type="PaxDb" id="9606-ENSP00000292476"/>
<dbReference type="PeptideAtlas" id="O95639"/>
<dbReference type="ProteomicsDB" id="50970">
    <molecule id="O95639-1"/>
</dbReference>
<dbReference type="ProteomicsDB" id="50971">
    <molecule id="O95639-2"/>
</dbReference>
<dbReference type="ProteomicsDB" id="50972">
    <molecule id="O95639-3"/>
</dbReference>
<dbReference type="Pumba" id="O95639"/>
<dbReference type="Antibodypedia" id="16165">
    <property type="antibodies" value="223 antibodies from 30 providers"/>
</dbReference>
<dbReference type="DNASU" id="10898"/>
<dbReference type="Ensembl" id="ENST00000292476.10">
    <molecule id="O95639-1"/>
    <property type="protein sequence ID" value="ENSP00000292476.5"/>
    <property type="gene ID" value="ENSG00000160917.15"/>
</dbReference>
<dbReference type="Ensembl" id="ENST00000436336.6">
    <molecule id="O95639-2"/>
    <property type="protein sequence ID" value="ENSP00000395311.2"/>
    <property type="gene ID" value="ENSG00000160917.15"/>
</dbReference>
<dbReference type="GeneID" id="10898"/>
<dbReference type="KEGG" id="hsa:10898"/>
<dbReference type="MANE-Select" id="ENST00000292476.10">
    <property type="protein sequence ID" value="ENSP00000292476.5"/>
    <property type="RefSeq nucleotide sequence ID" value="NM_006693.4"/>
    <property type="RefSeq protein sequence ID" value="NP_006684.1"/>
</dbReference>
<dbReference type="UCSC" id="uc003uqi.4">
    <molecule id="O95639-1"/>
    <property type="organism name" value="human"/>
</dbReference>
<dbReference type="AGR" id="HGNC:2327"/>
<dbReference type="CTD" id="10898"/>
<dbReference type="DisGeNET" id="10898"/>
<dbReference type="GeneCards" id="CPSF4"/>
<dbReference type="HGNC" id="HGNC:2327">
    <property type="gene designation" value="CPSF4"/>
</dbReference>
<dbReference type="HPA" id="ENSG00000160917">
    <property type="expression patterns" value="Low tissue specificity"/>
</dbReference>
<dbReference type="MIM" id="603052">
    <property type="type" value="gene"/>
</dbReference>
<dbReference type="neXtProt" id="NX_O95639"/>
<dbReference type="OpenTargets" id="ENSG00000160917"/>
<dbReference type="PharmGKB" id="PA26844"/>
<dbReference type="VEuPathDB" id="HostDB:ENSG00000160917"/>
<dbReference type="eggNOG" id="KOG1040">
    <property type="taxonomic scope" value="Eukaryota"/>
</dbReference>
<dbReference type="GeneTree" id="ENSGT00940000155520"/>
<dbReference type="HOGENOM" id="CLU_024513_0_1_1"/>
<dbReference type="InParanoid" id="O95639"/>
<dbReference type="OMA" id="EEVTCFK"/>
<dbReference type="OrthoDB" id="1914176at2759"/>
<dbReference type="PAN-GO" id="O95639">
    <property type="GO annotations" value="2 GO annotations based on evolutionary models"/>
</dbReference>
<dbReference type="PhylomeDB" id="O95639"/>
<dbReference type="TreeFam" id="TF314871"/>
<dbReference type="PathwayCommons" id="O95639"/>
<dbReference type="Reactome" id="R-HSA-159231">
    <property type="pathway name" value="Transport of Mature mRNA Derived from an Intronless Transcript"/>
</dbReference>
<dbReference type="Reactome" id="R-HSA-168315">
    <property type="pathway name" value="Inhibition of Host mRNA Processing and RNA Silencing"/>
</dbReference>
<dbReference type="Reactome" id="R-HSA-6784531">
    <property type="pathway name" value="tRNA processing in the nucleus"/>
</dbReference>
<dbReference type="Reactome" id="R-HSA-72187">
    <property type="pathway name" value="mRNA 3'-end processing"/>
</dbReference>
<dbReference type="Reactome" id="R-HSA-72203">
    <property type="pathway name" value="Processing of Capped Intron-Containing Pre-mRNA"/>
</dbReference>
<dbReference type="Reactome" id="R-HSA-73856">
    <property type="pathway name" value="RNA Polymerase II Transcription Termination"/>
</dbReference>
<dbReference type="Reactome" id="R-HSA-77595">
    <property type="pathway name" value="Processing of Intronless Pre-mRNAs"/>
</dbReference>
<dbReference type="SignaLink" id="O95639"/>
<dbReference type="SIGNOR" id="O95639"/>
<dbReference type="BioGRID-ORCS" id="10898">
    <property type="hits" value="590 hits in 1185 CRISPR screens"/>
</dbReference>
<dbReference type="ChiTaRS" id="CPSF4">
    <property type="organism name" value="human"/>
</dbReference>
<dbReference type="EvolutionaryTrace" id="O95639"/>
<dbReference type="GeneWiki" id="CPSF4"/>
<dbReference type="GenomeRNAi" id="10898"/>
<dbReference type="Pharos" id="O95639">
    <property type="development level" value="Tbio"/>
</dbReference>
<dbReference type="PRO" id="PR:O95639"/>
<dbReference type="Proteomes" id="UP000005640">
    <property type="component" value="Chromosome 7"/>
</dbReference>
<dbReference type="RNAct" id="O95639">
    <property type="molecule type" value="protein"/>
</dbReference>
<dbReference type="Bgee" id="ENSG00000160917">
    <property type="expression patterns" value="Expressed in secondary oocyte and 195 other cell types or tissues"/>
</dbReference>
<dbReference type="ExpressionAtlas" id="O95639">
    <property type="expression patterns" value="baseline and differential"/>
</dbReference>
<dbReference type="GO" id="GO:0043231">
    <property type="term" value="C:intracellular membrane-bounded organelle"/>
    <property type="evidence" value="ECO:0000314"/>
    <property type="project" value="HPA"/>
</dbReference>
<dbReference type="GO" id="GO:0005847">
    <property type="term" value="C:mRNA cleavage and polyadenylation specificity factor complex"/>
    <property type="evidence" value="ECO:0000314"/>
    <property type="project" value="UniProtKB"/>
</dbReference>
<dbReference type="GO" id="GO:0005654">
    <property type="term" value="C:nucleoplasm"/>
    <property type="evidence" value="ECO:0000314"/>
    <property type="project" value="HPA"/>
</dbReference>
<dbReference type="GO" id="GO:0003723">
    <property type="term" value="F:RNA binding"/>
    <property type="evidence" value="ECO:0007005"/>
    <property type="project" value="UniProtKB"/>
</dbReference>
<dbReference type="GO" id="GO:1990837">
    <property type="term" value="F:sequence-specific double-stranded DNA binding"/>
    <property type="evidence" value="ECO:0000314"/>
    <property type="project" value="ARUK-UCL"/>
</dbReference>
<dbReference type="GO" id="GO:0008270">
    <property type="term" value="F:zinc ion binding"/>
    <property type="evidence" value="ECO:0007669"/>
    <property type="project" value="UniProtKB-KW"/>
</dbReference>
<dbReference type="GO" id="GO:0006397">
    <property type="term" value="P:mRNA processing"/>
    <property type="evidence" value="ECO:0007669"/>
    <property type="project" value="UniProtKB-KW"/>
</dbReference>
<dbReference type="FunFam" id="4.10.60.10:FF:000008">
    <property type="entry name" value="Cleavage and polyadenylation specificity factor subunit 4"/>
    <property type="match status" value="1"/>
</dbReference>
<dbReference type="FunFam" id="4.10.1000.10:FF:000005">
    <property type="entry name" value="cleavage and polyadenylation specificity factor subunit 4"/>
    <property type="match status" value="1"/>
</dbReference>
<dbReference type="FunFam" id="4.10.1000.10:FF:000019">
    <property type="entry name" value="cleavage and polyadenylation specificity factor subunit 4 isoform X2"/>
    <property type="match status" value="1"/>
</dbReference>
<dbReference type="Gene3D" id="4.10.1000.10">
    <property type="entry name" value="Zinc finger, CCCH-type"/>
    <property type="match status" value="2"/>
</dbReference>
<dbReference type="Gene3D" id="4.10.60.10">
    <property type="entry name" value="Zinc finger, CCHC-type"/>
    <property type="match status" value="1"/>
</dbReference>
<dbReference type="InterPro" id="IPR045348">
    <property type="entry name" value="CPSF4/Yth1"/>
</dbReference>
<dbReference type="InterPro" id="IPR041686">
    <property type="entry name" value="Znf-CCCH_3"/>
</dbReference>
<dbReference type="InterPro" id="IPR000571">
    <property type="entry name" value="Znf_CCCH"/>
</dbReference>
<dbReference type="InterPro" id="IPR036855">
    <property type="entry name" value="Znf_CCCH_sf"/>
</dbReference>
<dbReference type="InterPro" id="IPR001878">
    <property type="entry name" value="Znf_CCHC"/>
</dbReference>
<dbReference type="InterPro" id="IPR036875">
    <property type="entry name" value="Znf_CCHC_sf"/>
</dbReference>
<dbReference type="PANTHER" id="PTHR23102:SF18">
    <property type="entry name" value="CLEAVAGE AND POLYADENYLATION SPECIFICITY FACTOR SUBUNIT 4"/>
    <property type="match status" value="1"/>
</dbReference>
<dbReference type="PANTHER" id="PTHR23102">
    <property type="entry name" value="CLEAVAGE AND POLYADENYLATION SPECIFICITY FACTOR SUBUNIT 4-RELATED"/>
    <property type="match status" value="1"/>
</dbReference>
<dbReference type="Pfam" id="PF00642">
    <property type="entry name" value="zf-CCCH"/>
    <property type="match status" value="1"/>
</dbReference>
<dbReference type="Pfam" id="PF15663">
    <property type="entry name" value="zf-CCCH_3"/>
    <property type="match status" value="1"/>
</dbReference>
<dbReference type="Pfam" id="PF00098">
    <property type="entry name" value="zf-CCHC"/>
    <property type="match status" value="1"/>
</dbReference>
<dbReference type="SMART" id="SM00343">
    <property type="entry name" value="ZnF_C2HC"/>
    <property type="match status" value="1"/>
</dbReference>
<dbReference type="SMART" id="SM00356">
    <property type="entry name" value="ZnF_C3H1"/>
    <property type="match status" value="5"/>
</dbReference>
<dbReference type="SUPFAM" id="SSF90229">
    <property type="entry name" value="CCCH zinc finger"/>
    <property type="match status" value="2"/>
</dbReference>
<dbReference type="SUPFAM" id="SSF57756">
    <property type="entry name" value="Retrovirus zinc finger-like domains"/>
    <property type="match status" value="1"/>
</dbReference>
<dbReference type="PROSITE" id="PS50103">
    <property type="entry name" value="ZF_C3H1"/>
    <property type="match status" value="5"/>
</dbReference>
<dbReference type="PROSITE" id="PS50158">
    <property type="entry name" value="ZF_CCHC"/>
    <property type="match status" value="1"/>
</dbReference>
<comment type="function">
    <text evidence="4 6">Component of the cleavage and polyadenylation specificity factor (CPSF) complex that play a key role in pre-mRNA 3'-end formation, recognizing the AAUAAA signal sequence and interacting with poly(A) polymerase and other factors to bring about cleavage and poly(A) addition. CPSF4 binds RNA polymers with a preference for poly(U).</text>
</comment>
<comment type="subunit">
    <text evidence="4 5">Component of the cleavage and polyadenylation specificity factor (CPSF) complex, composed of CPSF1, CPSF2, CPSF3, CPSF4 and FIP1L1. Interacts with FIP1L1.</text>
</comment>
<comment type="subunit">
    <text evidence="7">(Microbial infection) Interacts with influenza A virus NS1 blocks processing of pre-mRNAs, thereby preventing nuclear export of host cell mRNAs.</text>
</comment>
<comment type="interaction">
    <interactant intactId="EBI-725860">
        <id>O95639</id>
    </interactant>
    <interactant intactId="EBI-930143">
        <id>Q6P1J9</id>
        <label>CDC73</label>
    </interactant>
    <organismsDiffer>false</organismsDiffer>
    <experiments>3</experiments>
</comment>
<comment type="interaction">
    <interactant intactId="EBI-725860">
        <id>O95639</id>
    </interactant>
    <interactant intactId="EBI-1021914">
        <id>Q6UN15</id>
        <label>FIP1L1</label>
    </interactant>
    <organismsDiffer>false</organismsDiffer>
    <experiments>5</experiments>
</comment>
<comment type="interaction">
    <interactant intactId="EBI-725860">
        <id>O95639</id>
    </interactant>
    <interactant intactId="EBI-748397">
        <id>P50222</id>
        <label>MEOX2</label>
    </interactant>
    <organismsDiffer>false</organismsDiffer>
    <experiments>3</experiments>
</comment>
<comment type="interaction">
    <interactant intactId="EBI-725860">
        <id>O95639</id>
    </interactant>
    <interactant intactId="EBI-12561553">
        <id>I6T1Z2</id>
        <label>NS1</label>
    </interactant>
    <organismsDiffer>true</organismsDiffer>
    <experiments>5</experiments>
</comment>
<comment type="interaction">
    <interactant intactId="EBI-725860">
        <id>O95639</id>
    </interactant>
    <interactant intactId="EBI-11515076">
        <id>Q194T2</id>
        <label>NS1</label>
    </interactant>
    <organismsDiffer>true</organismsDiffer>
    <experiments>5</experiments>
</comment>
<comment type="interaction">
    <interactant intactId="EBI-15725265">
        <id>O95639-1</id>
    </interactant>
    <interactant intactId="EBI-2548993">
        <id>P03495</id>
        <label>NS</label>
    </interactant>
    <organismsDiffer>true</organismsDiffer>
    <experiments>4</experiments>
</comment>
<comment type="interaction">
    <interactant intactId="EBI-13063650">
        <id>O95639-2</id>
    </interactant>
    <interactant intactId="EBI-10172526">
        <id>Q9UJV3-2</id>
        <label>MID2</label>
    </interactant>
    <organismsDiffer>false</organismsDiffer>
    <experiments>3</experiments>
</comment>
<comment type="interaction">
    <interactant intactId="EBI-13063650">
        <id>O95639-2</id>
    </interactant>
    <interactant intactId="EBI-3906629">
        <id>P15173</id>
        <label>MYOG</label>
    </interactant>
    <organismsDiffer>false</organismsDiffer>
    <experiments>3</experiments>
</comment>
<comment type="subcellular location">
    <subcellularLocation>
        <location>Nucleus</location>
    </subcellularLocation>
</comment>
<comment type="alternative products">
    <event type="alternative splicing"/>
    <isoform>
        <id>O95639-1</id>
        <name>1</name>
        <sequence type="displayed"/>
    </isoform>
    <isoform>
        <id>O95639-2</id>
        <name>2</name>
        <sequence type="described" ref="VSP_008601"/>
    </isoform>
    <isoform>
        <id>O95639-3</id>
        <name>3</name>
        <sequence type="described" ref="VSP_008602"/>
    </isoform>
</comment>
<comment type="miscellaneous">
    <molecule>Isoform 3</molecule>
    <text evidence="9">May be due to a competing acceptor splice site.</text>
</comment>
<comment type="similarity">
    <text evidence="9">Belongs to the CPSF4/YTH1 family.</text>
</comment>
<keyword id="KW-0002">3D-structure</keyword>
<keyword id="KW-0025">Alternative splicing</keyword>
<keyword id="KW-0945">Host-virus interaction</keyword>
<keyword id="KW-0479">Metal-binding</keyword>
<keyword id="KW-0507">mRNA processing</keyword>
<keyword id="KW-0539">Nucleus</keyword>
<keyword id="KW-0597">Phosphoprotein</keyword>
<keyword id="KW-1267">Proteomics identification</keyword>
<keyword id="KW-1185">Reference proteome</keyword>
<keyword id="KW-0677">Repeat</keyword>
<keyword id="KW-0694">RNA-binding</keyword>
<keyword id="KW-0862">Zinc</keyword>
<keyword id="KW-0863">Zinc-finger</keyword>
<gene>
    <name type="primary">CPSF4</name>
    <name type="synonym">CPSF30</name>
    <name type="synonym">NAR</name>
    <name type="synonym">NEB1</name>
</gene>
<name>CPSF4_HUMAN</name>
<accession>O95639</accession>
<accession>D6W5S8</accession>
<accession>Q6FGE6</accession>
<accession>Q86TF8</accession>
<accession>Q9BTW6</accession>
<evidence type="ECO:0000255" key="1">
    <source>
        <dbReference type="PROSITE-ProRule" id="PRU00047"/>
    </source>
</evidence>
<evidence type="ECO:0000255" key="2">
    <source>
        <dbReference type="PROSITE-ProRule" id="PRU00723"/>
    </source>
</evidence>
<evidence type="ECO:0000256" key="3">
    <source>
        <dbReference type="SAM" id="MobiDB-lite"/>
    </source>
</evidence>
<evidence type="ECO:0000269" key="4">
    <source>
    </source>
</evidence>
<evidence type="ECO:0000269" key="5">
    <source>
    </source>
</evidence>
<evidence type="ECO:0000269" key="6">
    <source>
    </source>
</evidence>
<evidence type="ECO:0000269" key="7">
    <source>
    </source>
</evidence>
<evidence type="ECO:0000303" key="8">
    <source>
    </source>
</evidence>
<evidence type="ECO:0000305" key="9"/>
<evidence type="ECO:0007744" key="10">
    <source>
    </source>
</evidence>
<evidence type="ECO:0007744" key="11">
    <source>
    </source>
</evidence>
<evidence type="ECO:0007744" key="12">
    <source>
    </source>
</evidence>
<evidence type="ECO:0007744" key="13">
    <source>
    </source>
</evidence>
<evidence type="ECO:0007829" key="14">
    <source>
        <dbReference type="PDB" id="2D9N"/>
    </source>
</evidence>
<evidence type="ECO:0007829" key="15">
    <source>
        <dbReference type="PDB" id="2RHK"/>
    </source>
</evidence>
<evidence type="ECO:0007829" key="16">
    <source>
        <dbReference type="PDB" id="7K95"/>
    </source>
</evidence>
<evidence type="ECO:0007829" key="17">
    <source>
        <dbReference type="PDB" id="8E3I"/>
    </source>
</evidence>
<proteinExistence type="evidence at protein level"/>